<evidence type="ECO:0000255" key="1">
    <source>
        <dbReference type="HAMAP-Rule" id="MF_00368"/>
    </source>
</evidence>
<evidence type="ECO:0000305" key="2"/>
<keyword id="KW-0687">Ribonucleoprotein</keyword>
<keyword id="KW-0689">Ribosomal protein</keyword>
<comment type="function">
    <text evidence="1">Forms part of the ribosomal stalk which helps the ribosome interact with GTP-bound translation factors. Is thus essential for accurate translation.</text>
</comment>
<comment type="subunit">
    <text evidence="1">Homodimer. Part of the ribosomal stalk of the 50S ribosomal subunit. Forms a multimeric L10(L12)X complex, where L10 forms an elongated spine to which 2 to 4 L12 dimers bind in a sequential fashion. Binds GTP-bound translation factors.</text>
</comment>
<comment type="similarity">
    <text evidence="1">Belongs to the bacterial ribosomal protein bL12 family.</text>
</comment>
<organism>
    <name type="scientific">Ehrlichia canis (strain Jake)</name>
    <dbReference type="NCBI Taxonomy" id="269484"/>
    <lineage>
        <taxon>Bacteria</taxon>
        <taxon>Pseudomonadati</taxon>
        <taxon>Pseudomonadota</taxon>
        <taxon>Alphaproteobacteria</taxon>
        <taxon>Rickettsiales</taxon>
        <taxon>Anaplasmataceae</taxon>
        <taxon>Ehrlichia</taxon>
    </lineage>
</organism>
<proteinExistence type="inferred from homology"/>
<dbReference type="EMBL" id="CP000107">
    <property type="protein sequence ID" value="AAZ68219.1"/>
    <property type="molecule type" value="Genomic_DNA"/>
</dbReference>
<dbReference type="RefSeq" id="WP_011304297.1">
    <property type="nucleotide sequence ID" value="NC_007354.1"/>
</dbReference>
<dbReference type="SMR" id="Q3YST6"/>
<dbReference type="FunCoup" id="Q3YST6">
    <property type="interactions" value="362"/>
</dbReference>
<dbReference type="STRING" id="269484.Ecaj_0168"/>
<dbReference type="KEGG" id="ecn:Ecaj_0168"/>
<dbReference type="eggNOG" id="COG0222">
    <property type="taxonomic scope" value="Bacteria"/>
</dbReference>
<dbReference type="HOGENOM" id="CLU_086499_3_0_5"/>
<dbReference type="InParanoid" id="Q3YST6"/>
<dbReference type="Proteomes" id="UP000000435">
    <property type="component" value="Chromosome"/>
</dbReference>
<dbReference type="GO" id="GO:1990904">
    <property type="term" value="C:ribonucleoprotein complex"/>
    <property type="evidence" value="ECO:0007669"/>
    <property type="project" value="UniProtKB-KW"/>
</dbReference>
<dbReference type="GO" id="GO:0005840">
    <property type="term" value="C:ribosome"/>
    <property type="evidence" value="ECO:0007669"/>
    <property type="project" value="UniProtKB-KW"/>
</dbReference>
<dbReference type="GO" id="GO:0003729">
    <property type="term" value="F:mRNA binding"/>
    <property type="evidence" value="ECO:0007669"/>
    <property type="project" value="TreeGrafter"/>
</dbReference>
<dbReference type="GO" id="GO:0003735">
    <property type="term" value="F:structural constituent of ribosome"/>
    <property type="evidence" value="ECO:0007669"/>
    <property type="project" value="InterPro"/>
</dbReference>
<dbReference type="GO" id="GO:0006412">
    <property type="term" value="P:translation"/>
    <property type="evidence" value="ECO:0007669"/>
    <property type="project" value="UniProtKB-UniRule"/>
</dbReference>
<dbReference type="CDD" id="cd00387">
    <property type="entry name" value="Ribosomal_L7_L12"/>
    <property type="match status" value="1"/>
</dbReference>
<dbReference type="FunFam" id="3.30.1390.10:FF:000001">
    <property type="entry name" value="50S ribosomal protein L7/L12"/>
    <property type="match status" value="1"/>
</dbReference>
<dbReference type="Gene3D" id="3.30.1390.10">
    <property type="match status" value="1"/>
</dbReference>
<dbReference type="Gene3D" id="1.20.5.710">
    <property type="entry name" value="Single helix bin"/>
    <property type="match status" value="1"/>
</dbReference>
<dbReference type="HAMAP" id="MF_00368">
    <property type="entry name" value="Ribosomal_bL12"/>
    <property type="match status" value="1"/>
</dbReference>
<dbReference type="InterPro" id="IPR000206">
    <property type="entry name" value="Ribosomal_bL12"/>
</dbReference>
<dbReference type="InterPro" id="IPR013823">
    <property type="entry name" value="Ribosomal_bL12_C"/>
</dbReference>
<dbReference type="InterPro" id="IPR014719">
    <property type="entry name" value="Ribosomal_bL12_C/ClpS-like"/>
</dbReference>
<dbReference type="InterPro" id="IPR036235">
    <property type="entry name" value="Ribosomal_bL12_oligo_N_sf"/>
</dbReference>
<dbReference type="NCBIfam" id="TIGR00855">
    <property type="entry name" value="L12"/>
    <property type="match status" value="1"/>
</dbReference>
<dbReference type="PANTHER" id="PTHR45987">
    <property type="entry name" value="39S RIBOSOMAL PROTEIN L12"/>
    <property type="match status" value="1"/>
</dbReference>
<dbReference type="PANTHER" id="PTHR45987:SF4">
    <property type="entry name" value="LARGE RIBOSOMAL SUBUNIT PROTEIN BL12M"/>
    <property type="match status" value="1"/>
</dbReference>
<dbReference type="Pfam" id="PF00542">
    <property type="entry name" value="Ribosomal_L12"/>
    <property type="match status" value="1"/>
</dbReference>
<dbReference type="SUPFAM" id="SSF54736">
    <property type="entry name" value="ClpS-like"/>
    <property type="match status" value="1"/>
</dbReference>
<dbReference type="SUPFAM" id="SSF48300">
    <property type="entry name" value="Ribosomal protein L7/12, oligomerisation (N-terminal) domain"/>
    <property type="match status" value="1"/>
</dbReference>
<gene>
    <name evidence="1" type="primary">rplL</name>
    <name type="ordered locus">Ecaj_0168</name>
</gene>
<feature type="chain" id="PRO_1000195792" description="Large ribosomal subunit protein bL12">
    <location>
        <begin position="1"/>
        <end position="132"/>
    </location>
</feature>
<accession>Q3YST6</accession>
<sequence>MSTVDIDSLVEQICSLDLCKAAELVDKMEQKLGFPKGGLLTAVPAAGGGQAESSAAEEKTDFSVIFDSYAADKKISVIKAVRECTNLGLKEAKEFVEKEGAKELIEGKKYKKEEAEEIKKKLEDAGAKVIIK</sequence>
<reference key="1">
    <citation type="journal article" date="2006" name="J. Bacteriol.">
        <title>The genome of the obligately intracellular bacterium Ehrlichia canis reveals themes of complex membrane structure and immune evasion strategies.</title>
        <authorList>
            <person name="Mavromatis K."/>
            <person name="Doyle C.K."/>
            <person name="Lykidis A."/>
            <person name="Ivanova N."/>
            <person name="Francino M.P."/>
            <person name="Chain P."/>
            <person name="Shin M."/>
            <person name="Malfatti S."/>
            <person name="Larimer F."/>
            <person name="Copeland A."/>
            <person name="Detter J.C."/>
            <person name="Land M."/>
            <person name="Richardson P.M."/>
            <person name="Yu X.J."/>
            <person name="Walker D.H."/>
            <person name="McBride J.W."/>
            <person name="Kyrpides N.C."/>
        </authorList>
    </citation>
    <scope>NUCLEOTIDE SEQUENCE [LARGE SCALE GENOMIC DNA]</scope>
    <source>
        <strain>Jake</strain>
    </source>
</reference>
<name>RL7_EHRCJ</name>
<protein>
    <recommendedName>
        <fullName evidence="1">Large ribosomal subunit protein bL12</fullName>
    </recommendedName>
    <alternativeName>
        <fullName evidence="2">50S ribosomal protein L7/L12</fullName>
    </alternativeName>
</protein>